<proteinExistence type="inferred from homology"/>
<name>YHAM_ECOL5</name>
<dbReference type="EMBL" id="CP000247">
    <property type="protein sequence ID" value="ABG71185.1"/>
    <property type="molecule type" value="Genomic_DNA"/>
</dbReference>
<dbReference type="KEGG" id="ecp:ECP_3203"/>
<dbReference type="HOGENOM" id="CLU_051840_0_0_6"/>
<dbReference type="Proteomes" id="UP000009182">
    <property type="component" value="Chromosome"/>
</dbReference>
<dbReference type="GO" id="GO:0080146">
    <property type="term" value="F:L-cysteine desulfhydrase activity"/>
    <property type="evidence" value="ECO:0007669"/>
    <property type="project" value="TreeGrafter"/>
</dbReference>
<dbReference type="GO" id="GO:0019450">
    <property type="term" value="P:L-cysteine catabolic process to pyruvate"/>
    <property type="evidence" value="ECO:0007669"/>
    <property type="project" value="TreeGrafter"/>
</dbReference>
<dbReference type="HAMAP" id="MF_01845">
    <property type="entry name" value="UPF0597"/>
    <property type="match status" value="1"/>
</dbReference>
<dbReference type="InterPro" id="IPR005130">
    <property type="entry name" value="Ser_deHydtase-like_asu"/>
</dbReference>
<dbReference type="InterPro" id="IPR021144">
    <property type="entry name" value="UPF0597"/>
</dbReference>
<dbReference type="PANTHER" id="PTHR30501">
    <property type="entry name" value="UPF0597 PROTEIN YHAM"/>
    <property type="match status" value="1"/>
</dbReference>
<dbReference type="PANTHER" id="PTHR30501:SF2">
    <property type="entry name" value="UPF0597 PROTEIN YHAM"/>
    <property type="match status" value="1"/>
</dbReference>
<dbReference type="Pfam" id="PF03313">
    <property type="entry name" value="SDH_alpha"/>
    <property type="match status" value="1"/>
</dbReference>
<dbReference type="PIRSF" id="PIRSF006054">
    <property type="entry name" value="UCP006054"/>
    <property type="match status" value="1"/>
</dbReference>
<organism>
    <name type="scientific">Escherichia coli O6:K15:H31 (strain 536 / UPEC)</name>
    <dbReference type="NCBI Taxonomy" id="362663"/>
    <lineage>
        <taxon>Bacteria</taxon>
        <taxon>Pseudomonadati</taxon>
        <taxon>Pseudomonadota</taxon>
        <taxon>Gammaproteobacteria</taxon>
        <taxon>Enterobacterales</taxon>
        <taxon>Enterobacteriaceae</taxon>
        <taxon>Escherichia</taxon>
    </lineage>
</organism>
<comment type="similarity">
    <text evidence="1">Belongs to the UPF0597 family.</text>
</comment>
<protein>
    <recommendedName>
        <fullName evidence="1">UPF0597 protein YhaM</fullName>
    </recommendedName>
</protein>
<reference key="1">
    <citation type="journal article" date="2006" name="Mol. Microbiol.">
        <title>Role of pathogenicity island-associated integrases in the genome plasticity of uropathogenic Escherichia coli strain 536.</title>
        <authorList>
            <person name="Hochhut B."/>
            <person name="Wilde C."/>
            <person name="Balling G."/>
            <person name="Middendorf B."/>
            <person name="Dobrindt U."/>
            <person name="Brzuszkiewicz E."/>
            <person name="Gottschalk G."/>
            <person name="Carniel E."/>
            <person name="Hacker J."/>
        </authorList>
    </citation>
    <scope>NUCLEOTIDE SEQUENCE [LARGE SCALE GENOMIC DNA]</scope>
    <source>
        <strain>536 / UPEC</strain>
    </source>
</reference>
<evidence type="ECO:0000255" key="1">
    <source>
        <dbReference type="HAMAP-Rule" id="MF_01845"/>
    </source>
</evidence>
<gene>
    <name evidence="1" type="primary">yhaM</name>
    <name type="ordered locus">ECP_3203</name>
</gene>
<accession>Q0TCZ4</accession>
<feature type="chain" id="PRO_0000339824" description="UPF0597 protein YhaM">
    <location>
        <begin position="1"/>
        <end position="436"/>
    </location>
</feature>
<sequence>MFDSTLNPLWQRYILAVQEEVKPALGCTEPISLALAAAVAAAELEGPVERVEAWVSPNLMKNGLGVTVPGTGMVGLPIAAALGALGGNANAGLEVLKDATAQAISDAKALLAAGKVSVKIQEPCDEILFSRAKVWNGEKWACVTIVGGHTNIVHIETHNGVVFTQQACVTEGEQESPLTVLSRTTLAEILKFVNEVPFAAIRFILDSAKLNCALSQEGLSGNWGLHIGATLEKQCARGLLAKDLSSSIVIRTSAASDARMGGATLPAMSNSGSGNQGITATMPVVVVAEHFGADDERLARALMLSHLSAIYIHNQLPRLSALCAATTAAMGAAAGMAWLVDGRYETISMAISSMIGDVSGMICDGASNSCAMKVSTSASAAWKAVLMALDDTAVTGNEGIVAHDVEQSIANLCALASHSMQQTDRQIIEIMASKAR</sequence>